<reference key="1">
    <citation type="journal article" date="1993" name="FEMS Microbiol. Lett.">
        <title>Analysis of the Salmonella fim gene cluster: identification of a new gene (fimI) encoding a fimbrin-like protein and located downstream from the fimA gene.</title>
        <authorList>
            <person name="Rossolini G.M."/>
            <person name="Muscas P."/>
            <person name="Chiesurin A."/>
            <person name="Satta G."/>
        </authorList>
    </citation>
    <scope>NUCLEOTIDE SEQUENCE [GENOMIC DNA]</scope>
    <source>
        <strain>STY4</strain>
    </source>
</reference>
<reference key="2">
    <citation type="journal article" date="2001" name="Nature">
        <title>Complete genome sequence of a multiple drug resistant Salmonella enterica serovar Typhi CT18.</title>
        <authorList>
            <person name="Parkhill J."/>
            <person name="Dougan G."/>
            <person name="James K.D."/>
            <person name="Thomson N.R."/>
            <person name="Pickard D."/>
            <person name="Wain J."/>
            <person name="Churcher C.M."/>
            <person name="Mungall K.L."/>
            <person name="Bentley S.D."/>
            <person name="Holden M.T.G."/>
            <person name="Sebaihia M."/>
            <person name="Baker S."/>
            <person name="Basham D."/>
            <person name="Brooks K."/>
            <person name="Chillingworth T."/>
            <person name="Connerton P."/>
            <person name="Cronin A."/>
            <person name="Davis P."/>
            <person name="Davies R.M."/>
            <person name="Dowd L."/>
            <person name="White N."/>
            <person name="Farrar J."/>
            <person name="Feltwell T."/>
            <person name="Hamlin N."/>
            <person name="Haque A."/>
            <person name="Hien T.T."/>
            <person name="Holroyd S."/>
            <person name="Jagels K."/>
            <person name="Krogh A."/>
            <person name="Larsen T.S."/>
            <person name="Leather S."/>
            <person name="Moule S."/>
            <person name="O'Gaora P."/>
            <person name="Parry C."/>
            <person name="Quail M.A."/>
            <person name="Rutherford K.M."/>
            <person name="Simmonds M."/>
            <person name="Skelton J."/>
            <person name="Stevens K."/>
            <person name="Whitehead S."/>
            <person name="Barrell B.G."/>
        </authorList>
    </citation>
    <scope>NUCLEOTIDE SEQUENCE [LARGE SCALE GENOMIC DNA]</scope>
    <source>
        <strain>CT18</strain>
    </source>
</reference>
<reference key="3">
    <citation type="journal article" date="2003" name="J. Bacteriol.">
        <title>Comparative genomics of Salmonella enterica serovar Typhi strains Ty2 and CT18.</title>
        <authorList>
            <person name="Deng W."/>
            <person name="Liou S.-R."/>
            <person name="Plunkett G. III"/>
            <person name="Mayhew G.F."/>
            <person name="Rose D.J."/>
            <person name="Burland V."/>
            <person name="Kodoyianni V."/>
            <person name="Schwartz D.C."/>
            <person name="Blattner F.R."/>
        </authorList>
    </citation>
    <scope>NUCLEOTIDE SEQUENCE [LARGE SCALE GENOMIC DNA]</scope>
    <source>
        <strain>ATCC 700931 / Ty2</strain>
    </source>
</reference>
<organism>
    <name type="scientific">Salmonella typhi</name>
    <dbReference type="NCBI Taxonomy" id="90370"/>
    <lineage>
        <taxon>Bacteria</taxon>
        <taxon>Pseudomonadati</taxon>
        <taxon>Pseudomonadota</taxon>
        <taxon>Gammaproteobacteria</taxon>
        <taxon>Enterobacterales</taxon>
        <taxon>Enterobacteriaceae</taxon>
        <taxon>Salmonella</taxon>
    </lineage>
</organism>
<keyword id="KW-1015">Disulfide bond</keyword>
<keyword id="KW-0281">Fimbrium</keyword>
<keyword id="KW-0732">Signal</keyword>
<feature type="signal peptide" evidence="2">
    <location>
        <begin position="1"/>
        <end position="19"/>
    </location>
</feature>
<feature type="chain" id="PRO_0000009250" description="Putative fimbrin-like protein FimI">
    <location>
        <begin position="20"/>
        <end position="177"/>
    </location>
</feature>
<feature type="disulfide bond" evidence="1">
    <location>
        <begin position="40"/>
        <end position="81"/>
    </location>
</feature>
<gene>
    <name type="primary">fimI</name>
    <name type="ordered locus">STY0590</name>
    <name type="ordered locus">t2319</name>
</gene>
<proteinExistence type="uncertain"/>
<accession>Q08456</accession>
<protein>
    <recommendedName>
        <fullName>Putative fimbrin-like protein FimI</fullName>
    </recommendedName>
</protein>
<evidence type="ECO:0000250" key="1"/>
<evidence type="ECO:0000255" key="2"/>
<evidence type="ECO:0000305" key="3"/>
<name>FIMI_SALTI</name>
<comment type="subcellular location">
    <subcellularLocation>
        <location evidence="3">Fimbrium</location>
    </subcellularLocation>
</comment>
<comment type="similarity">
    <text evidence="3">Belongs to the fimbrial protein family.</text>
</comment>
<comment type="caution">
    <text evidence="3">Could be the product of a pseudogene in strain CT18.</text>
</comment>
<comment type="sequence caution" evidence="3">
    <conflict type="erroneous termination">
        <sequence resource="EMBL" id="AL513382"/>
    </conflict>
    <text>Truncated C-terminus.</text>
</comment>
<sequence>MIRKGAALVGLVLMSPVIAQPVMVESGRVHLRGQLVNGGCAVATESQDLRVLMGQYRTNAFTGPGSFAPVSVPFSLRLISCSAEVWRHVGIAFAGVTPAEDPHVFLASGEGIGNAGIGLALFDDQQRQIIPNTLPLHYAPILTSEMTLHFTARYRAISENMTPGRIHSEVWFTLVYP</sequence>
<dbReference type="EMBL" id="X74064">
    <property type="protein sequence ID" value="CAA52195.1"/>
    <property type="molecule type" value="Genomic_DNA"/>
</dbReference>
<dbReference type="EMBL" id="AL513382">
    <property type="status" value="NOT_ANNOTATED_CDS"/>
    <property type="molecule type" value="Genomic_DNA"/>
</dbReference>
<dbReference type="EMBL" id="AE014613">
    <property type="protein sequence ID" value="AAO69913.1"/>
    <property type="molecule type" value="Genomic_DNA"/>
</dbReference>
<dbReference type="PIR" id="S34658">
    <property type="entry name" value="S34658"/>
</dbReference>
<dbReference type="RefSeq" id="WP_000619617.1">
    <property type="nucleotide sequence ID" value="NZ_WSUR01000008.1"/>
</dbReference>
<dbReference type="SMR" id="Q08456"/>
<dbReference type="KEGG" id="stt:t2319"/>
<dbReference type="PATRIC" id="fig|90370.929.peg.1561"/>
<dbReference type="HOGENOM" id="CLU_088965_0_0_6"/>
<dbReference type="OMA" id="IQSDVWF"/>
<dbReference type="OrthoDB" id="6522787at2"/>
<dbReference type="Proteomes" id="UP000000541">
    <property type="component" value="Chromosome"/>
</dbReference>
<dbReference type="Proteomes" id="UP000002670">
    <property type="component" value="Chromosome"/>
</dbReference>
<dbReference type="GO" id="GO:0009289">
    <property type="term" value="C:pilus"/>
    <property type="evidence" value="ECO:0007669"/>
    <property type="project" value="UniProtKB-SubCell"/>
</dbReference>
<dbReference type="GO" id="GO:0043709">
    <property type="term" value="P:cell adhesion involved in single-species biofilm formation"/>
    <property type="evidence" value="ECO:0007669"/>
    <property type="project" value="TreeGrafter"/>
</dbReference>
<dbReference type="FunFam" id="2.60.40.1090:FF:000019">
    <property type="entry name" value="Type 1 fimbrial protein subunit FimI"/>
    <property type="match status" value="1"/>
</dbReference>
<dbReference type="Gene3D" id="2.60.40.1090">
    <property type="entry name" value="Fimbrial-type adhesion domain"/>
    <property type="match status" value="1"/>
</dbReference>
<dbReference type="InterPro" id="IPR000259">
    <property type="entry name" value="Adhesion_dom_fimbrial"/>
</dbReference>
<dbReference type="InterPro" id="IPR036937">
    <property type="entry name" value="Adhesion_dom_fimbrial_sf"/>
</dbReference>
<dbReference type="InterPro" id="IPR008966">
    <property type="entry name" value="Adhesion_dom_sf"/>
</dbReference>
<dbReference type="InterPro" id="IPR050263">
    <property type="entry name" value="Bact_Fimbrial_Adh_Pro"/>
</dbReference>
<dbReference type="NCBIfam" id="NF011747">
    <property type="entry name" value="PRK15200.1"/>
    <property type="match status" value="1"/>
</dbReference>
<dbReference type="PANTHER" id="PTHR33420">
    <property type="entry name" value="FIMBRIAL SUBUNIT ELFA-RELATED"/>
    <property type="match status" value="1"/>
</dbReference>
<dbReference type="PANTHER" id="PTHR33420:SF12">
    <property type="entry name" value="FIMBRIN-LIKE PROTEIN FIMI-RELATED"/>
    <property type="match status" value="1"/>
</dbReference>
<dbReference type="Pfam" id="PF00419">
    <property type="entry name" value="Fimbrial"/>
    <property type="match status" value="1"/>
</dbReference>
<dbReference type="SUPFAM" id="SSF49401">
    <property type="entry name" value="Bacterial adhesins"/>
    <property type="match status" value="1"/>
</dbReference>